<sequence>MELLKALLLLSGVLGALAEFCVIPKMDGQLVEKLGQRLLPWMDRLSSEQLNPSIYVGLRLSSMQAGTKENLYLHNLKLHYQQCLLRSTSSDDNSGCQTKISGGSLALYLLALRANCELLGSRKGDRMVSQLKWFLEDEKKAIGHHHEGHPHTSYYQYGLSILALCVHRKRVHDSVVGKLLYAVEHDYFTYQGHLSVDTEAMAGLAFTCLERFNFNSDLRPRITTAIETVREKILKAQAPEGYFGNIYSTPLALQMLMTSPGVGLGPACLKARKSLLLSLQDGAFQNPMMISQLLPVLNHKTYLNLISPDCQAPRVMLVPATEDPVHLSEVSVTLKVSSVLPPYERTVSVFAGASLEDVLNRARDLGEFTYGTQASLSGPYLTSVLGKEAGDREYWQLLRVPDTPLLQGIADYKPKNGETIELRLVKM</sequence>
<dbReference type="EMBL" id="AF054810">
    <property type="protein sequence ID" value="AAD55672.1"/>
    <property type="molecule type" value="mRNA"/>
</dbReference>
<dbReference type="PDB" id="8IXT">
    <property type="method" value="X-ray"/>
    <property type="resolution" value="1.20 A"/>
    <property type="chains" value="A=19-427"/>
</dbReference>
<dbReference type="PDB" id="8IXU">
    <property type="method" value="X-ray"/>
    <property type="resolution" value="1.30 A"/>
    <property type="chains" value="A=19-427"/>
</dbReference>
<dbReference type="PDBsum" id="8IXT"/>
<dbReference type="PDBsum" id="8IXU"/>
<dbReference type="SMR" id="Q9R0D6"/>
<dbReference type="FunCoup" id="Q9R0D6">
    <property type="interactions" value="314"/>
</dbReference>
<dbReference type="STRING" id="10116.ENSRNOP00000005934"/>
<dbReference type="PaxDb" id="10116-ENSRNOP00000005934"/>
<dbReference type="UCSC" id="RGD:620681">
    <property type="organism name" value="rat"/>
</dbReference>
<dbReference type="AGR" id="RGD:620681"/>
<dbReference type="RGD" id="620681">
    <property type="gene designation" value="Tcn2"/>
</dbReference>
<dbReference type="eggNOG" id="ENOG502QSED">
    <property type="taxonomic scope" value="Eukaryota"/>
</dbReference>
<dbReference type="InParanoid" id="Q9R0D6"/>
<dbReference type="PhylomeDB" id="Q9R0D6"/>
<dbReference type="Reactome" id="R-RNO-9758890">
    <property type="pathway name" value="Transport of RCbl within the body"/>
</dbReference>
<dbReference type="PRO" id="PR:Q9R0D6"/>
<dbReference type="Proteomes" id="UP000002494">
    <property type="component" value="Unplaced"/>
</dbReference>
<dbReference type="GO" id="GO:0009897">
    <property type="term" value="C:external side of plasma membrane"/>
    <property type="evidence" value="ECO:0000266"/>
    <property type="project" value="RGD"/>
</dbReference>
<dbReference type="GO" id="GO:0005615">
    <property type="term" value="C:extracellular space"/>
    <property type="evidence" value="ECO:0000314"/>
    <property type="project" value="RGD"/>
</dbReference>
<dbReference type="GO" id="GO:0140355">
    <property type="term" value="F:cargo receptor ligand activity"/>
    <property type="evidence" value="ECO:0000266"/>
    <property type="project" value="RGD"/>
</dbReference>
<dbReference type="GO" id="GO:0031419">
    <property type="term" value="F:cobalamin binding"/>
    <property type="evidence" value="ECO:0000314"/>
    <property type="project" value="RGD"/>
</dbReference>
<dbReference type="GO" id="GO:0046872">
    <property type="term" value="F:metal ion binding"/>
    <property type="evidence" value="ECO:0007669"/>
    <property type="project" value="UniProtKB-KW"/>
</dbReference>
<dbReference type="GO" id="GO:0015889">
    <property type="term" value="P:cobalamin transport"/>
    <property type="evidence" value="ECO:0000250"/>
    <property type="project" value="UniProtKB"/>
</dbReference>
<dbReference type="GO" id="GO:0006824">
    <property type="term" value="P:cobalt ion transport"/>
    <property type="evidence" value="ECO:0007669"/>
    <property type="project" value="UniProtKB-KW"/>
</dbReference>
<dbReference type="FunFam" id="1.50.10.20:FF:000013">
    <property type="entry name" value="Transcobalamin-2"/>
    <property type="match status" value="1"/>
</dbReference>
<dbReference type="Gene3D" id="1.50.10.20">
    <property type="match status" value="1"/>
</dbReference>
<dbReference type="Gene3D" id="2.170.130.30">
    <property type="match status" value="1"/>
</dbReference>
<dbReference type="InterPro" id="IPR002157">
    <property type="entry name" value="Cbl-bd_prot"/>
</dbReference>
<dbReference type="InterPro" id="IPR051588">
    <property type="entry name" value="Cobalamin_Transport"/>
</dbReference>
<dbReference type="InterPro" id="IPR027954">
    <property type="entry name" value="Transcobalamin-like_C"/>
</dbReference>
<dbReference type="PANTHER" id="PTHR10559">
    <property type="entry name" value="TRANSCOBALAMIN-1/GASTRIC INTRINSIC FACTOR"/>
    <property type="match status" value="1"/>
</dbReference>
<dbReference type="PANTHER" id="PTHR10559:SF14">
    <property type="entry name" value="TRANSCOBALAMIN-2"/>
    <property type="match status" value="1"/>
</dbReference>
<dbReference type="Pfam" id="PF01122">
    <property type="entry name" value="Cobalamin_bind"/>
    <property type="match status" value="1"/>
</dbReference>
<dbReference type="Pfam" id="PF14478">
    <property type="entry name" value="DUF4430"/>
    <property type="match status" value="1"/>
</dbReference>
<dbReference type="PROSITE" id="PS00468">
    <property type="entry name" value="COBALAMIN_BINDING"/>
    <property type="match status" value="1"/>
</dbReference>
<evidence type="ECO:0000250" key="1"/>
<evidence type="ECO:0000250" key="2">
    <source>
        <dbReference type="UniProtKB" id="P20062"/>
    </source>
</evidence>
<evidence type="ECO:0000305" key="3"/>
<evidence type="ECO:0007829" key="4">
    <source>
        <dbReference type="PDB" id="8IXU"/>
    </source>
</evidence>
<gene>
    <name type="primary">Tcn2</name>
</gene>
<comment type="function">
    <text evidence="2">Primary vitamin B12-binding and transport protein. Delivers cobalamin to cells.</text>
</comment>
<comment type="subunit">
    <text evidence="2">Interacts with CD320 (via LDL-receptor class A domains).</text>
</comment>
<comment type="subcellular location">
    <subcellularLocation>
        <location evidence="2">Secreted</location>
    </subcellularLocation>
</comment>
<comment type="similarity">
    <text evidence="3">Belongs to the eukaryotic cobalamin transport proteins family.</text>
</comment>
<protein>
    <recommendedName>
        <fullName>Transcobalamin-2</fullName>
        <shortName>TC-2</shortName>
    </recommendedName>
    <alternativeName>
        <fullName>Transcobalamin II</fullName>
        <shortName>TC II</shortName>
        <shortName>TCII</shortName>
    </alternativeName>
</protein>
<accession>Q9R0D6</accession>
<reference key="1">
    <citation type="journal article" date="2004" name="Arch. Biochem. Biophys.">
        <title>Cobalamin (vitamin B12) binding, phylogeny, and synteny of human transcobalamin.</title>
        <authorList>
            <person name="Kalra S."/>
            <person name="Li N."/>
            <person name="Yammani R.R."/>
            <person name="Seetharam S."/>
            <person name="Seetharam B."/>
        </authorList>
    </citation>
    <scope>NUCLEOTIDE SEQUENCE [MRNA]</scope>
    <source>
        <strain>Sprague-Dawley</strain>
        <tissue>Kidney</tissue>
    </source>
</reference>
<feature type="signal peptide" evidence="1">
    <location>
        <begin position="1"/>
        <end position="18"/>
    </location>
</feature>
<feature type="chain" id="PRO_0000005567" description="Transcobalamin-2">
    <location>
        <begin position="19"/>
        <end position="427"/>
    </location>
</feature>
<feature type="binding site" evidence="1">
    <location>
        <begin position="152"/>
        <end position="156"/>
    </location>
    <ligand>
        <name>cob(II)alamin</name>
        <dbReference type="ChEBI" id="CHEBI:16304"/>
    </ligand>
</feature>
<feature type="binding site" evidence="1">
    <location>
        <begin position="193"/>
        <end position="197"/>
    </location>
    <ligand>
        <name>cob(II)alamin</name>
        <dbReference type="ChEBI" id="CHEBI:16304"/>
    </ligand>
</feature>
<feature type="binding site" description="axial binding residue" evidence="1">
    <location>
        <position position="193"/>
    </location>
    <ligand>
        <name>cob(II)alamin</name>
        <dbReference type="ChEBI" id="CHEBI:16304"/>
    </ligand>
    <ligandPart>
        <name>Co</name>
        <dbReference type="ChEBI" id="CHEBI:27638"/>
    </ligandPart>
</feature>
<feature type="binding site" evidence="1">
    <location>
        <position position="245"/>
    </location>
    <ligand>
        <name>cob(II)alamin</name>
        <dbReference type="ChEBI" id="CHEBI:16304"/>
    </ligand>
</feature>
<feature type="binding site" evidence="1">
    <location>
        <position position="248"/>
    </location>
    <ligand>
        <name>cob(II)alamin</name>
        <dbReference type="ChEBI" id="CHEBI:16304"/>
    </ligand>
</feature>
<feature type="binding site" evidence="1">
    <location>
        <position position="292"/>
    </location>
    <ligand>
        <name>cob(II)alamin</name>
        <dbReference type="ChEBI" id="CHEBI:16304"/>
    </ligand>
</feature>
<feature type="binding site" evidence="1">
    <location>
        <begin position="395"/>
        <end position="397"/>
    </location>
    <ligand>
        <name>cob(II)alamin</name>
        <dbReference type="ChEBI" id="CHEBI:16304"/>
    </ligand>
</feature>
<feature type="disulfide bond" evidence="1">
    <location>
        <begin position="21"/>
        <end position="268"/>
    </location>
</feature>
<feature type="disulfide bond" evidence="1">
    <location>
        <begin position="116"/>
        <end position="310"/>
    </location>
</feature>
<feature type="disulfide bond" evidence="1">
    <location>
        <begin position="165"/>
        <end position="208"/>
    </location>
</feature>
<feature type="helix" evidence="4">
    <location>
        <begin position="28"/>
        <end position="38"/>
    </location>
</feature>
<feature type="helix" evidence="4">
    <location>
        <begin position="39"/>
        <end position="43"/>
    </location>
</feature>
<feature type="turn" evidence="4">
    <location>
        <begin position="47"/>
        <end position="49"/>
    </location>
</feature>
<feature type="helix" evidence="4">
    <location>
        <begin position="52"/>
        <end position="59"/>
    </location>
</feature>
<feature type="strand" evidence="4">
    <location>
        <begin position="61"/>
        <end position="64"/>
    </location>
</feature>
<feature type="helix" evidence="4">
    <location>
        <begin position="67"/>
        <end position="82"/>
    </location>
</feature>
<feature type="helix" evidence="4">
    <location>
        <begin position="102"/>
        <end position="114"/>
    </location>
</feature>
<feature type="strand" evidence="4">
    <location>
        <begin position="119"/>
        <end position="123"/>
    </location>
</feature>
<feature type="helix" evidence="4">
    <location>
        <begin position="126"/>
        <end position="142"/>
    </location>
</feature>
<feature type="helix" evidence="4">
    <location>
        <begin position="154"/>
        <end position="166"/>
    </location>
</feature>
<feature type="helix" evidence="4">
    <location>
        <begin position="173"/>
        <end position="184"/>
    </location>
</feature>
<feature type="strand" evidence="4">
    <location>
        <begin position="187"/>
        <end position="190"/>
    </location>
</feature>
<feature type="helix" evidence="4">
    <location>
        <begin position="196"/>
        <end position="212"/>
    </location>
</feature>
<feature type="helix" evidence="4">
    <location>
        <begin position="216"/>
        <end position="218"/>
    </location>
</feature>
<feature type="helix" evidence="4">
    <location>
        <begin position="219"/>
        <end position="235"/>
    </location>
</feature>
<feature type="strand" evidence="4">
    <location>
        <begin position="243"/>
        <end position="245"/>
    </location>
</feature>
<feature type="turn" evidence="4">
    <location>
        <begin position="246"/>
        <end position="248"/>
    </location>
</feature>
<feature type="helix" evidence="4">
    <location>
        <begin position="249"/>
        <end position="257"/>
    </location>
</feature>
<feature type="helix" evidence="4">
    <location>
        <begin position="264"/>
        <end position="280"/>
    </location>
</feature>
<feature type="helix" evidence="4">
    <location>
        <begin position="287"/>
        <end position="297"/>
    </location>
</feature>
<feature type="helix" evidence="4">
    <location>
        <begin position="302"/>
        <end position="305"/>
    </location>
</feature>
<feature type="strand" evidence="4">
    <location>
        <begin position="329"/>
        <end position="336"/>
    </location>
</feature>
<feature type="strand" evidence="4">
    <location>
        <begin position="338"/>
        <end position="341"/>
    </location>
</feature>
<feature type="strand" evidence="4">
    <location>
        <begin position="343"/>
        <end position="350"/>
    </location>
</feature>
<feature type="helix" evidence="4">
    <location>
        <begin position="355"/>
        <end position="365"/>
    </location>
</feature>
<feature type="strand" evidence="4">
    <location>
        <begin position="370"/>
        <end position="373"/>
    </location>
</feature>
<feature type="strand" evidence="4">
    <location>
        <begin position="380"/>
        <end position="384"/>
    </location>
</feature>
<feature type="strand" evidence="4">
    <location>
        <begin position="393"/>
        <end position="399"/>
    </location>
</feature>
<feature type="turn" evidence="4">
    <location>
        <begin position="400"/>
        <end position="402"/>
    </location>
</feature>
<feature type="turn" evidence="4">
    <location>
        <begin position="409"/>
        <end position="411"/>
    </location>
</feature>
<feature type="strand" evidence="4">
    <location>
        <begin position="419"/>
        <end position="426"/>
    </location>
</feature>
<proteinExistence type="evidence at protein level"/>
<name>TCO2_RAT</name>
<keyword id="KW-0002">3D-structure</keyword>
<keyword id="KW-0170">Cobalt</keyword>
<keyword id="KW-0171">Cobalt transport</keyword>
<keyword id="KW-1015">Disulfide bond</keyword>
<keyword id="KW-0406">Ion transport</keyword>
<keyword id="KW-0479">Metal-binding</keyword>
<keyword id="KW-1185">Reference proteome</keyword>
<keyword id="KW-0964">Secreted</keyword>
<keyword id="KW-0732">Signal</keyword>
<keyword id="KW-0813">Transport</keyword>
<organism>
    <name type="scientific">Rattus norvegicus</name>
    <name type="common">Rat</name>
    <dbReference type="NCBI Taxonomy" id="10116"/>
    <lineage>
        <taxon>Eukaryota</taxon>
        <taxon>Metazoa</taxon>
        <taxon>Chordata</taxon>
        <taxon>Craniata</taxon>
        <taxon>Vertebrata</taxon>
        <taxon>Euteleostomi</taxon>
        <taxon>Mammalia</taxon>
        <taxon>Eutheria</taxon>
        <taxon>Euarchontoglires</taxon>
        <taxon>Glires</taxon>
        <taxon>Rodentia</taxon>
        <taxon>Myomorpha</taxon>
        <taxon>Muroidea</taxon>
        <taxon>Muridae</taxon>
        <taxon>Murinae</taxon>
        <taxon>Rattus</taxon>
    </lineage>
</organism>